<protein>
    <recommendedName>
        <fullName evidence="1">Queuine tRNA-ribosyltransferase</fullName>
        <ecNumber evidence="1">2.4.2.29</ecNumber>
    </recommendedName>
    <alternativeName>
        <fullName evidence="1">Guanine insertion enzyme</fullName>
    </alternativeName>
    <alternativeName>
        <fullName evidence="1">tRNA-guanine transglycosylase</fullName>
    </alternativeName>
</protein>
<proteinExistence type="inferred from homology"/>
<accession>A5IM22</accession>
<feature type="chain" id="PRO_1000016884" description="Queuine tRNA-ribosyltransferase">
    <location>
        <begin position="1"/>
        <end position="369"/>
    </location>
</feature>
<feature type="region of interest" description="RNA binding" evidence="1">
    <location>
        <begin position="242"/>
        <end position="248"/>
    </location>
</feature>
<feature type="region of interest" description="RNA binding; important for wobble base 34 recognition" evidence="1">
    <location>
        <begin position="266"/>
        <end position="270"/>
    </location>
</feature>
<feature type="active site" description="Proton acceptor" evidence="1">
    <location>
        <position position="89"/>
    </location>
</feature>
<feature type="active site" description="Nucleophile" evidence="1">
    <location>
        <position position="261"/>
    </location>
</feature>
<feature type="binding site" evidence="1">
    <location>
        <begin position="89"/>
        <end position="93"/>
    </location>
    <ligand>
        <name>substrate</name>
    </ligand>
</feature>
<feature type="binding site" evidence="1">
    <location>
        <position position="142"/>
    </location>
    <ligand>
        <name>substrate</name>
    </ligand>
</feature>
<feature type="binding site" evidence="1">
    <location>
        <position position="184"/>
    </location>
    <ligand>
        <name>substrate</name>
    </ligand>
</feature>
<feature type="binding site" evidence="1">
    <location>
        <position position="211"/>
    </location>
    <ligand>
        <name>substrate</name>
    </ligand>
</feature>
<feature type="binding site" evidence="1">
    <location>
        <position position="299"/>
    </location>
    <ligand>
        <name>Zn(2+)</name>
        <dbReference type="ChEBI" id="CHEBI:29105"/>
    </ligand>
</feature>
<feature type="binding site" evidence="1">
    <location>
        <position position="301"/>
    </location>
    <ligand>
        <name>Zn(2+)</name>
        <dbReference type="ChEBI" id="CHEBI:29105"/>
    </ligand>
</feature>
<feature type="binding site" evidence="1">
    <location>
        <position position="304"/>
    </location>
    <ligand>
        <name>Zn(2+)</name>
        <dbReference type="ChEBI" id="CHEBI:29105"/>
    </ligand>
</feature>
<feature type="binding site" evidence="1">
    <location>
        <position position="330"/>
    </location>
    <ligand>
        <name>Zn(2+)</name>
        <dbReference type="ChEBI" id="CHEBI:29105"/>
    </ligand>
</feature>
<evidence type="ECO:0000255" key="1">
    <source>
        <dbReference type="HAMAP-Rule" id="MF_00168"/>
    </source>
</evidence>
<dbReference type="EC" id="2.4.2.29" evidence="1"/>
<dbReference type="EMBL" id="CP000702">
    <property type="protein sequence ID" value="ABQ47245.1"/>
    <property type="molecule type" value="Genomic_DNA"/>
</dbReference>
<dbReference type="RefSeq" id="WP_004081969.1">
    <property type="nucleotide sequence ID" value="NC_009486.1"/>
</dbReference>
<dbReference type="SMR" id="A5IM22"/>
<dbReference type="STRING" id="390874.Tpet_1231"/>
<dbReference type="KEGG" id="tpt:Tpet_1231"/>
<dbReference type="eggNOG" id="COG0343">
    <property type="taxonomic scope" value="Bacteria"/>
</dbReference>
<dbReference type="HOGENOM" id="CLU_022060_0_1_0"/>
<dbReference type="UniPathway" id="UPA00392"/>
<dbReference type="Proteomes" id="UP000006558">
    <property type="component" value="Chromosome"/>
</dbReference>
<dbReference type="GO" id="GO:0005829">
    <property type="term" value="C:cytosol"/>
    <property type="evidence" value="ECO:0007669"/>
    <property type="project" value="TreeGrafter"/>
</dbReference>
<dbReference type="GO" id="GO:0046872">
    <property type="term" value="F:metal ion binding"/>
    <property type="evidence" value="ECO:0007669"/>
    <property type="project" value="UniProtKB-KW"/>
</dbReference>
<dbReference type="GO" id="GO:0008479">
    <property type="term" value="F:tRNA-guanosine(34) queuine transglycosylase activity"/>
    <property type="evidence" value="ECO:0007669"/>
    <property type="project" value="UniProtKB-UniRule"/>
</dbReference>
<dbReference type="GO" id="GO:0008616">
    <property type="term" value="P:queuosine biosynthetic process"/>
    <property type="evidence" value="ECO:0007669"/>
    <property type="project" value="UniProtKB-UniRule"/>
</dbReference>
<dbReference type="GO" id="GO:0002099">
    <property type="term" value="P:tRNA wobble guanine modification"/>
    <property type="evidence" value="ECO:0007669"/>
    <property type="project" value="TreeGrafter"/>
</dbReference>
<dbReference type="GO" id="GO:0101030">
    <property type="term" value="P:tRNA-guanine transglycosylation"/>
    <property type="evidence" value="ECO:0007669"/>
    <property type="project" value="InterPro"/>
</dbReference>
<dbReference type="FunFam" id="3.20.20.105:FF:000001">
    <property type="entry name" value="Queuine tRNA-ribosyltransferase"/>
    <property type="match status" value="1"/>
</dbReference>
<dbReference type="Gene3D" id="3.20.20.105">
    <property type="entry name" value="Queuine tRNA-ribosyltransferase-like"/>
    <property type="match status" value="1"/>
</dbReference>
<dbReference type="HAMAP" id="MF_00168">
    <property type="entry name" value="Q_tRNA_Tgt"/>
    <property type="match status" value="1"/>
</dbReference>
<dbReference type="InterPro" id="IPR050076">
    <property type="entry name" value="ArchSynthase1/Queuine_TRR"/>
</dbReference>
<dbReference type="InterPro" id="IPR004803">
    <property type="entry name" value="TGT"/>
</dbReference>
<dbReference type="InterPro" id="IPR036511">
    <property type="entry name" value="TGT-like_sf"/>
</dbReference>
<dbReference type="InterPro" id="IPR002616">
    <property type="entry name" value="tRNA_ribo_trans-like"/>
</dbReference>
<dbReference type="NCBIfam" id="TIGR00430">
    <property type="entry name" value="Q_tRNA_tgt"/>
    <property type="match status" value="1"/>
</dbReference>
<dbReference type="NCBIfam" id="TIGR00449">
    <property type="entry name" value="tgt_general"/>
    <property type="match status" value="1"/>
</dbReference>
<dbReference type="PANTHER" id="PTHR46499">
    <property type="entry name" value="QUEUINE TRNA-RIBOSYLTRANSFERASE"/>
    <property type="match status" value="1"/>
</dbReference>
<dbReference type="PANTHER" id="PTHR46499:SF1">
    <property type="entry name" value="QUEUINE TRNA-RIBOSYLTRANSFERASE"/>
    <property type="match status" value="1"/>
</dbReference>
<dbReference type="Pfam" id="PF01702">
    <property type="entry name" value="TGT"/>
    <property type="match status" value="1"/>
</dbReference>
<dbReference type="SUPFAM" id="SSF51713">
    <property type="entry name" value="tRNA-guanine transglycosylase"/>
    <property type="match status" value="1"/>
</dbReference>
<name>TGT_THEP1</name>
<keyword id="KW-0328">Glycosyltransferase</keyword>
<keyword id="KW-0479">Metal-binding</keyword>
<keyword id="KW-0671">Queuosine biosynthesis</keyword>
<keyword id="KW-0808">Transferase</keyword>
<keyword id="KW-0819">tRNA processing</keyword>
<keyword id="KW-0862">Zinc</keyword>
<reference key="1">
    <citation type="submission" date="2007-05" db="EMBL/GenBank/DDBJ databases">
        <title>Complete sequence of Thermotoga petrophila RKU-1.</title>
        <authorList>
            <consortium name="US DOE Joint Genome Institute"/>
            <person name="Copeland A."/>
            <person name="Lucas S."/>
            <person name="Lapidus A."/>
            <person name="Barry K."/>
            <person name="Glavina del Rio T."/>
            <person name="Dalin E."/>
            <person name="Tice H."/>
            <person name="Pitluck S."/>
            <person name="Sims D."/>
            <person name="Brettin T."/>
            <person name="Bruce D."/>
            <person name="Detter J.C."/>
            <person name="Han C."/>
            <person name="Tapia R."/>
            <person name="Schmutz J."/>
            <person name="Larimer F."/>
            <person name="Land M."/>
            <person name="Hauser L."/>
            <person name="Kyrpides N."/>
            <person name="Mikhailova N."/>
            <person name="Nelson K."/>
            <person name="Gogarten J.P."/>
            <person name="Noll K."/>
            <person name="Richardson P."/>
        </authorList>
    </citation>
    <scope>NUCLEOTIDE SEQUENCE [LARGE SCALE GENOMIC DNA]</scope>
    <source>
        <strain>ATCC BAA-488 / DSM 13995 / JCM 10881 / RKU-1</strain>
    </source>
</reference>
<sequence length="369" mass="41429">MEFEVKKTFGKARLGVMKLHHGAVETPVFMPVGTNASVKLLTPRDLEEAGAEIILSNTFHLMLKPGVEIIKLHRGLHNFMGWKRPILTDSGGFQVFSLPKIRIDDEGVVFRSPIDGSKVFLNPEISMEVQIALGSDICMVFDHCPVPDADYEEVKEATERTYRWALRSKKAFKTENQALFGIVQGGIYPDLRRESALQLTSIGFDGYAIGGLSIGEERSLTLEMTEVTVEFLPEDKPRYFMGGGSPELILELVDRGVDMFDSVFPTRIARHGTALTWNGKLNLKASYNKRSLEPVDERCGCYTCKNFTRSYIHHLFDRGEVLGQILLTIHNINFMISLMKEVRRSIESGTFKELKSKVVEVYSSGGVNV</sequence>
<gene>
    <name evidence="1" type="primary">tgt</name>
    <name type="ordered locus">Tpet_1231</name>
</gene>
<organism>
    <name type="scientific">Thermotoga petrophila (strain ATCC BAA-488 / DSM 13995 / JCM 10881 / RKU-1)</name>
    <dbReference type="NCBI Taxonomy" id="390874"/>
    <lineage>
        <taxon>Bacteria</taxon>
        <taxon>Thermotogati</taxon>
        <taxon>Thermotogota</taxon>
        <taxon>Thermotogae</taxon>
        <taxon>Thermotogales</taxon>
        <taxon>Thermotogaceae</taxon>
        <taxon>Thermotoga</taxon>
    </lineage>
</organism>
<comment type="function">
    <text evidence="1">Catalyzes the base-exchange of a guanine (G) residue with the queuine precursor 7-aminomethyl-7-deazaguanine (PreQ1) at position 34 (anticodon wobble position) in tRNAs with GU(N) anticodons (tRNA-Asp, -Asn, -His and -Tyr). Catalysis occurs through a double-displacement mechanism. The nucleophile active site attacks the C1' of nucleotide 34 to detach the guanine base from the RNA, forming a covalent enzyme-RNA intermediate. The proton acceptor active site deprotonates the incoming PreQ1, allowing a nucleophilic attack on the C1' of the ribose to form the product. After dissociation, two additional enzymatic reactions on the tRNA convert PreQ1 to queuine (Q), resulting in the hypermodified nucleoside queuosine (7-(((4,5-cis-dihydroxy-2-cyclopenten-1-yl)amino)methyl)-7-deazaguanosine).</text>
</comment>
<comment type="catalytic activity">
    <reaction evidence="1">
        <text>7-aminomethyl-7-carbaguanine + guanosine(34) in tRNA = 7-aminomethyl-7-carbaguanosine(34) in tRNA + guanine</text>
        <dbReference type="Rhea" id="RHEA:24104"/>
        <dbReference type="Rhea" id="RHEA-COMP:10341"/>
        <dbReference type="Rhea" id="RHEA-COMP:10342"/>
        <dbReference type="ChEBI" id="CHEBI:16235"/>
        <dbReference type="ChEBI" id="CHEBI:58703"/>
        <dbReference type="ChEBI" id="CHEBI:74269"/>
        <dbReference type="ChEBI" id="CHEBI:82833"/>
        <dbReference type="EC" id="2.4.2.29"/>
    </reaction>
</comment>
<comment type="cofactor">
    <cofactor evidence="1">
        <name>Zn(2+)</name>
        <dbReference type="ChEBI" id="CHEBI:29105"/>
    </cofactor>
    <text evidence="1">Binds 1 zinc ion per subunit.</text>
</comment>
<comment type="pathway">
    <text evidence="1">tRNA modification; tRNA-queuosine biosynthesis.</text>
</comment>
<comment type="subunit">
    <text evidence="1">Homodimer. Within each dimer, one monomer is responsible for RNA recognition and catalysis, while the other monomer binds to the replacement base PreQ1.</text>
</comment>
<comment type="similarity">
    <text evidence="1">Belongs to the queuine tRNA-ribosyltransferase family.</text>
</comment>